<protein>
    <recommendedName>
        <fullName>Fatty-acid amide hydrolase 2-A</fullName>
        <ecNumber>3.5.1.99</ecNumber>
    </recommendedName>
</protein>
<accession>Q6DH69</accession>
<gene>
    <name type="primary">faah2a</name>
    <name type="ORF">zgc:92625</name>
</gene>
<comment type="catalytic activity">
    <reaction>
        <text>N-(5Z,8Z,11Z,14Z-eicosatetraenoyl)-ethanolamine + H2O = ethanolamine + (5Z,8Z,11Z,14Z)-eicosatetraenoate</text>
        <dbReference type="Rhea" id="RHEA:26136"/>
        <dbReference type="ChEBI" id="CHEBI:2700"/>
        <dbReference type="ChEBI" id="CHEBI:15377"/>
        <dbReference type="ChEBI" id="CHEBI:32395"/>
        <dbReference type="ChEBI" id="CHEBI:57603"/>
        <dbReference type="EC" id="3.5.1.99"/>
    </reaction>
</comment>
<comment type="catalytic activity">
    <reaction>
        <text>(9Z)-octadecenamide + H2O = (9Z)-octadecenoate + NH4(+)</text>
        <dbReference type="Rhea" id="RHEA:26506"/>
        <dbReference type="ChEBI" id="CHEBI:15377"/>
        <dbReference type="ChEBI" id="CHEBI:28938"/>
        <dbReference type="ChEBI" id="CHEBI:30823"/>
        <dbReference type="ChEBI" id="CHEBI:116314"/>
        <dbReference type="EC" id="3.5.1.99"/>
    </reaction>
</comment>
<comment type="subcellular location">
    <subcellularLocation>
        <location evidence="3">Membrane</location>
        <topology evidence="3">Single-pass membrane protein</topology>
    </subcellularLocation>
</comment>
<comment type="similarity">
    <text evidence="3">Belongs to the amidase family.</text>
</comment>
<keyword id="KW-0378">Hydrolase</keyword>
<keyword id="KW-0442">Lipid degradation</keyword>
<keyword id="KW-0443">Lipid metabolism</keyword>
<keyword id="KW-0472">Membrane</keyword>
<keyword id="KW-1185">Reference proteome</keyword>
<keyword id="KW-0812">Transmembrane</keyword>
<keyword id="KW-1133">Transmembrane helix</keyword>
<feature type="chain" id="PRO_0000291994" description="Fatty-acid amide hydrolase 2-A">
    <location>
        <begin position="1"/>
        <end position="532"/>
    </location>
</feature>
<feature type="transmembrane region" description="Helical" evidence="2">
    <location>
        <begin position="9"/>
        <end position="29"/>
    </location>
</feature>
<feature type="active site" description="Charge relay system" evidence="1">
    <location>
        <position position="129"/>
    </location>
</feature>
<feature type="active site" description="Charge relay system" evidence="1">
    <location>
        <position position="204"/>
    </location>
</feature>
<feature type="active site" description="Acyl-ester intermediate" evidence="1">
    <location>
        <position position="228"/>
    </location>
</feature>
<name>FAH2A_DANRE</name>
<organism>
    <name type="scientific">Danio rerio</name>
    <name type="common">Zebrafish</name>
    <name type="synonym">Brachydanio rerio</name>
    <dbReference type="NCBI Taxonomy" id="7955"/>
    <lineage>
        <taxon>Eukaryota</taxon>
        <taxon>Metazoa</taxon>
        <taxon>Chordata</taxon>
        <taxon>Craniata</taxon>
        <taxon>Vertebrata</taxon>
        <taxon>Euteleostomi</taxon>
        <taxon>Actinopterygii</taxon>
        <taxon>Neopterygii</taxon>
        <taxon>Teleostei</taxon>
        <taxon>Ostariophysi</taxon>
        <taxon>Cypriniformes</taxon>
        <taxon>Danionidae</taxon>
        <taxon>Danioninae</taxon>
        <taxon>Danio</taxon>
    </lineage>
</organism>
<sequence>MALTRFERFLGRLLRAVVWILFAAFKLFAPQQRHGVSRLPPITNPLLLLSAMQLARKIRRKEVTSVEVVQAYIDRIQEVNPLINAMVKDRFSAALQEAAQVDKLIEEETGGEDVLEDRLPLLGVPITVKEAFALQGMPNSTGLLTRRDLVSGADAPSVALLKRAGAIPLGVTNCSELCMWLESHNHLYGITNNPYDFERIVGGSSGGEGSILGAGSSVIGIGSDIGGSIRIPCFFNGIFGHKPSVGIVNNEGQYPPASGQQMGFLCTGPMCRYAEDLIPMLSIMGGPNAEKLSLFTEVDLKKLRFFSVPHNGGSHLVSPVEPQLLHAQKMVVKRLEADLGVKVQELLIPQLKYSFQIWGTMMASPGKDGKPPTTFAELMSEGGKKVWPAWELFKWFLGFSSHTLAAIGLALVELFQSSHPSPFIMQQKESLQQELEELLGTDGVLLYPSHPLIAQKHHHPIFTPFNFSYTGIFNILGLPVTQCPLGLSAEGLPLGVQIVAGKLQDRLSLATALYLEKAFGGWREPGKTTIKP</sequence>
<dbReference type="EC" id="3.5.1.99"/>
<dbReference type="EMBL" id="BC076113">
    <property type="protein sequence ID" value="AAH76113.1"/>
    <property type="molecule type" value="mRNA"/>
</dbReference>
<dbReference type="RefSeq" id="NP_001002700.1">
    <property type="nucleotide sequence ID" value="NM_001002700.2"/>
</dbReference>
<dbReference type="SMR" id="Q6DH69"/>
<dbReference type="FunCoup" id="Q6DH69">
    <property type="interactions" value="257"/>
</dbReference>
<dbReference type="STRING" id="7955.ENSDARP00000037509"/>
<dbReference type="PaxDb" id="7955-ENSDARP00000037509"/>
<dbReference type="Ensembl" id="ENSDART00000037553">
    <property type="protein sequence ID" value="ENSDARP00000037509"/>
    <property type="gene ID" value="ENSDARG00000008457"/>
</dbReference>
<dbReference type="Ensembl" id="ENSDART00000185873">
    <property type="protein sequence ID" value="ENSDARP00000146345"/>
    <property type="gene ID" value="ENSDARG00000112163"/>
</dbReference>
<dbReference type="GeneID" id="436973"/>
<dbReference type="KEGG" id="dre:436973"/>
<dbReference type="AGR" id="ZFIN:ZDB-GENE-040718-453"/>
<dbReference type="CTD" id="436973"/>
<dbReference type="ZFIN" id="ZDB-GENE-040718-453">
    <property type="gene designation" value="faah2a"/>
</dbReference>
<dbReference type="eggNOG" id="KOG1212">
    <property type="taxonomic scope" value="Eukaryota"/>
</dbReference>
<dbReference type="HOGENOM" id="CLU_009600_16_1_1"/>
<dbReference type="InParanoid" id="Q6DH69"/>
<dbReference type="OMA" id="MHEDTTD"/>
<dbReference type="OrthoDB" id="6428749at2759"/>
<dbReference type="PhylomeDB" id="Q6DH69"/>
<dbReference type="TreeFam" id="TF313781"/>
<dbReference type="Reactome" id="R-DRE-2142753">
    <property type="pathway name" value="Arachidonate metabolism"/>
</dbReference>
<dbReference type="PRO" id="PR:Q6DH69"/>
<dbReference type="Proteomes" id="UP000000437">
    <property type="component" value="Alternate scaffold 1"/>
</dbReference>
<dbReference type="Proteomes" id="UP000000437">
    <property type="component" value="Chromosome 1"/>
</dbReference>
<dbReference type="Bgee" id="ENSDARG00000008457">
    <property type="expression patterns" value="Expressed in liver and 19 other cell types or tissues"/>
</dbReference>
<dbReference type="ExpressionAtlas" id="Q6DH69">
    <property type="expression patterns" value="baseline and differential"/>
</dbReference>
<dbReference type="GO" id="GO:0016020">
    <property type="term" value="C:membrane"/>
    <property type="evidence" value="ECO:0007669"/>
    <property type="project" value="UniProtKB-SubCell"/>
</dbReference>
<dbReference type="GO" id="GO:0017064">
    <property type="term" value="F:fatty acid amide hydrolase activity"/>
    <property type="evidence" value="ECO:0007669"/>
    <property type="project" value="UniProtKB-EC"/>
</dbReference>
<dbReference type="GO" id="GO:0016042">
    <property type="term" value="P:lipid catabolic process"/>
    <property type="evidence" value="ECO:0007669"/>
    <property type="project" value="UniProtKB-KW"/>
</dbReference>
<dbReference type="Gene3D" id="3.90.1300.10">
    <property type="entry name" value="Amidase signature (AS) domain"/>
    <property type="match status" value="1"/>
</dbReference>
<dbReference type="InterPro" id="IPR020556">
    <property type="entry name" value="Amidase_CS"/>
</dbReference>
<dbReference type="InterPro" id="IPR023631">
    <property type="entry name" value="Amidase_dom"/>
</dbReference>
<dbReference type="InterPro" id="IPR036928">
    <property type="entry name" value="AS_sf"/>
</dbReference>
<dbReference type="InterPro" id="IPR052739">
    <property type="entry name" value="FAAH2"/>
</dbReference>
<dbReference type="PANTHER" id="PTHR43372">
    <property type="entry name" value="FATTY-ACID AMIDE HYDROLASE"/>
    <property type="match status" value="1"/>
</dbReference>
<dbReference type="PANTHER" id="PTHR43372:SF4">
    <property type="entry name" value="FATTY-ACID AMIDE HYDROLASE 2"/>
    <property type="match status" value="1"/>
</dbReference>
<dbReference type="Pfam" id="PF01425">
    <property type="entry name" value="Amidase"/>
    <property type="match status" value="1"/>
</dbReference>
<dbReference type="PIRSF" id="PIRSF001221">
    <property type="entry name" value="Amidase_fungi"/>
    <property type="match status" value="1"/>
</dbReference>
<dbReference type="SUPFAM" id="SSF75304">
    <property type="entry name" value="Amidase signature (AS) enzymes"/>
    <property type="match status" value="1"/>
</dbReference>
<dbReference type="PROSITE" id="PS00571">
    <property type="entry name" value="AMIDASES"/>
    <property type="match status" value="1"/>
</dbReference>
<evidence type="ECO:0000250" key="1"/>
<evidence type="ECO:0000255" key="2"/>
<evidence type="ECO:0000305" key="3"/>
<reference key="1">
    <citation type="submission" date="2004-07" db="EMBL/GenBank/DDBJ databases">
        <authorList>
            <consortium name="NIH - Zebrafish Gene Collection (ZGC) project"/>
        </authorList>
    </citation>
    <scope>NUCLEOTIDE SEQUENCE [LARGE SCALE MRNA]</scope>
    <source>
        <strain>AB</strain>
        <tissue>Liver</tissue>
    </source>
</reference>
<reference key="2">
    <citation type="journal article" date="2007" name="Mol. Genet. Genomics">
        <title>A shifted repertoire of endocannabinoid genes in the zebrafish (Danio rerio).</title>
        <authorList>
            <person name="McPartland J.M."/>
            <person name="Glass M."/>
            <person name="Matias I."/>
            <person name="Norris R.W."/>
            <person name="Kilpatrick C.W."/>
        </authorList>
    </citation>
    <scope>IDENTIFICATION AS FAAH2A</scope>
</reference>
<proteinExistence type="evidence at transcript level"/>